<dbReference type="EC" id="2.8.1.6" evidence="1"/>
<dbReference type="EMBL" id="CP001133">
    <property type="protein sequence ID" value="ACH64364.1"/>
    <property type="molecule type" value="Genomic_DNA"/>
</dbReference>
<dbReference type="RefSeq" id="WP_005423115.1">
    <property type="nucleotide sequence ID" value="NC_011186.1"/>
</dbReference>
<dbReference type="SMR" id="B5EUQ0"/>
<dbReference type="KEGG" id="vfm:VFMJ11_A0870"/>
<dbReference type="HOGENOM" id="CLU_033172_1_2_6"/>
<dbReference type="UniPathway" id="UPA00078">
    <property type="reaction ID" value="UER00162"/>
</dbReference>
<dbReference type="Proteomes" id="UP000001857">
    <property type="component" value="Chromosome II"/>
</dbReference>
<dbReference type="GO" id="GO:0051537">
    <property type="term" value="F:2 iron, 2 sulfur cluster binding"/>
    <property type="evidence" value="ECO:0007669"/>
    <property type="project" value="UniProtKB-KW"/>
</dbReference>
<dbReference type="GO" id="GO:0051539">
    <property type="term" value="F:4 iron, 4 sulfur cluster binding"/>
    <property type="evidence" value="ECO:0007669"/>
    <property type="project" value="UniProtKB-KW"/>
</dbReference>
<dbReference type="GO" id="GO:0004076">
    <property type="term" value="F:biotin synthase activity"/>
    <property type="evidence" value="ECO:0007669"/>
    <property type="project" value="UniProtKB-UniRule"/>
</dbReference>
<dbReference type="GO" id="GO:0005506">
    <property type="term" value="F:iron ion binding"/>
    <property type="evidence" value="ECO:0007669"/>
    <property type="project" value="UniProtKB-UniRule"/>
</dbReference>
<dbReference type="GO" id="GO:0009102">
    <property type="term" value="P:biotin biosynthetic process"/>
    <property type="evidence" value="ECO:0007669"/>
    <property type="project" value="UniProtKB-UniRule"/>
</dbReference>
<dbReference type="CDD" id="cd01335">
    <property type="entry name" value="Radical_SAM"/>
    <property type="match status" value="1"/>
</dbReference>
<dbReference type="FunFam" id="3.20.20.70:FF:000011">
    <property type="entry name" value="Biotin synthase"/>
    <property type="match status" value="1"/>
</dbReference>
<dbReference type="Gene3D" id="3.20.20.70">
    <property type="entry name" value="Aldolase class I"/>
    <property type="match status" value="1"/>
</dbReference>
<dbReference type="HAMAP" id="MF_01694">
    <property type="entry name" value="BioB"/>
    <property type="match status" value="1"/>
</dbReference>
<dbReference type="InterPro" id="IPR013785">
    <property type="entry name" value="Aldolase_TIM"/>
</dbReference>
<dbReference type="InterPro" id="IPR010722">
    <property type="entry name" value="BATS_dom"/>
</dbReference>
<dbReference type="InterPro" id="IPR002684">
    <property type="entry name" value="Biotin_synth/BioAB"/>
</dbReference>
<dbReference type="InterPro" id="IPR024177">
    <property type="entry name" value="Biotin_synthase"/>
</dbReference>
<dbReference type="InterPro" id="IPR006638">
    <property type="entry name" value="Elp3/MiaA/NifB-like_rSAM"/>
</dbReference>
<dbReference type="InterPro" id="IPR007197">
    <property type="entry name" value="rSAM"/>
</dbReference>
<dbReference type="NCBIfam" id="TIGR00433">
    <property type="entry name" value="bioB"/>
    <property type="match status" value="1"/>
</dbReference>
<dbReference type="PANTHER" id="PTHR22976">
    <property type="entry name" value="BIOTIN SYNTHASE"/>
    <property type="match status" value="1"/>
</dbReference>
<dbReference type="PANTHER" id="PTHR22976:SF2">
    <property type="entry name" value="BIOTIN SYNTHASE, MITOCHONDRIAL"/>
    <property type="match status" value="1"/>
</dbReference>
<dbReference type="Pfam" id="PF06968">
    <property type="entry name" value="BATS"/>
    <property type="match status" value="1"/>
</dbReference>
<dbReference type="Pfam" id="PF04055">
    <property type="entry name" value="Radical_SAM"/>
    <property type="match status" value="1"/>
</dbReference>
<dbReference type="PIRSF" id="PIRSF001619">
    <property type="entry name" value="Biotin_synth"/>
    <property type="match status" value="1"/>
</dbReference>
<dbReference type="SFLD" id="SFLDF00272">
    <property type="entry name" value="biotin_synthase"/>
    <property type="match status" value="1"/>
</dbReference>
<dbReference type="SFLD" id="SFLDG01278">
    <property type="entry name" value="biotin_synthase_like"/>
    <property type="match status" value="1"/>
</dbReference>
<dbReference type="SMART" id="SM00876">
    <property type="entry name" value="BATS"/>
    <property type="match status" value="1"/>
</dbReference>
<dbReference type="SMART" id="SM00729">
    <property type="entry name" value="Elp3"/>
    <property type="match status" value="1"/>
</dbReference>
<dbReference type="SUPFAM" id="SSF102114">
    <property type="entry name" value="Radical SAM enzymes"/>
    <property type="match status" value="1"/>
</dbReference>
<dbReference type="PROSITE" id="PS51918">
    <property type="entry name" value="RADICAL_SAM"/>
    <property type="match status" value="1"/>
</dbReference>
<accession>B5EUQ0</accession>
<evidence type="ECO:0000255" key="1">
    <source>
        <dbReference type="HAMAP-Rule" id="MF_01694"/>
    </source>
</evidence>
<evidence type="ECO:0000255" key="2">
    <source>
        <dbReference type="PROSITE-ProRule" id="PRU01266"/>
    </source>
</evidence>
<reference key="1">
    <citation type="submission" date="2008-08" db="EMBL/GenBank/DDBJ databases">
        <title>Complete sequence of Vibrio fischeri strain MJ11.</title>
        <authorList>
            <person name="Mandel M.J."/>
            <person name="Stabb E.V."/>
            <person name="Ruby E.G."/>
            <person name="Ferriera S."/>
            <person name="Johnson J."/>
            <person name="Kravitz S."/>
            <person name="Beeson K."/>
            <person name="Sutton G."/>
            <person name="Rogers Y.-H."/>
            <person name="Friedman R."/>
            <person name="Frazier M."/>
            <person name="Venter J.C."/>
        </authorList>
    </citation>
    <scope>NUCLEOTIDE SEQUENCE [LARGE SCALE GENOMIC DNA]</scope>
    <source>
        <strain>MJ11</strain>
    </source>
</reference>
<organism>
    <name type="scientific">Aliivibrio fischeri (strain MJ11)</name>
    <name type="common">Vibrio fischeri</name>
    <dbReference type="NCBI Taxonomy" id="388396"/>
    <lineage>
        <taxon>Bacteria</taxon>
        <taxon>Pseudomonadati</taxon>
        <taxon>Pseudomonadota</taxon>
        <taxon>Gammaproteobacteria</taxon>
        <taxon>Vibrionales</taxon>
        <taxon>Vibrionaceae</taxon>
        <taxon>Aliivibrio</taxon>
    </lineage>
</organism>
<proteinExistence type="inferred from homology"/>
<name>BIOB_ALIFM</name>
<feature type="chain" id="PRO_0000381698" description="Biotin synthase">
    <location>
        <begin position="1"/>
        <end position="350"/>
    </location>
</feature>
<feature type="domain" description="Radical SAM core" evidence="2">
    <location>
        <begin position="38"/>
        <end position="256"/>
    </location>
</feature>
<feature type="binding site" evidence="1">
    <location>
        <position position="53"/>
    </location>
    <ligand>
        <name>[4Fe-4S] cluster</name>
        <dbReference type="ChEBI" id="CHEBI:49883"/>
        <note>4Fe-4S-S-AdoMet</note>
    </ligand>
</feature>
<feature type="binding site" evidence="1">
    <location>
        <position position="57"/>
    </location>
    <ligand>
        <name>[4Fe-4S] cluster</name>
        <dbReference type="ChEBI" id="CHEBI:49883"/>
        <note>4Fe-4S-S-AdoMet</note>
    </ligand>
</feature>
<feature type="binding site" evidence="1">
    <location>
        <position position="60"/>
    </location>
    <ligand>
        <name>[4Fe-4S] cluster</name>
        <dbReference type="ChEBI" id="CHEBI:49883"/>
        <note>4Fe-4S-S-AdoMet</note>
    </ligand>
</feature>
<feature type="binding site" evidence="1">
    <location>
        <position position="97"/>
    </location>
    <ligand>
        <name>[2Fe-2S] cluster</name>
        <dbReference type="ChEBI" id="CHEBI:190135"/>
    </ligand>
</feature>
<feature type="binding site" evidence="1">
    <location>
        <position position="128"/>
    </location>
    <ligand>
        <name>[2Fe-2S] cluster</name>
        <dbReference type="ChEBI" id="CHEBI:190135"/>
    </ligand>
</feature>
<feature type="binding site" evidence="1">
    <location>
        <position position="188"/>
    </location>
    <ligand>
        <name>[2Fe-2S] cluster</name>
        <dbReference type="ChEBI" id="CHEBI:190135"/>
    </ligand>
</feature>
<feature type="binding site" evidence="1">
    <location>
        <position position="260"/>
    </location>
    <ligand>
        <name>[2Fe-2S] cluster</name>
        <dbReference type="ChEBI" id="CHEBI:190135"/>
    </ligand>
</feature>
<protein>
    <recommendedName>
        <fullName evidence="1">Biotin synthase</fullName>
        <ecNumber evidence="1">2.8.1.6</ecNumber>
    </recommendedName>
</protein>
<gene>
    <name evidence="1" type="primary">bioB</name>
    <name type="ordered locus">VFMJ11_A0870</name>
</gene>
<comment type="function">
    <text evidence="1">Catalyzes the conversion of dethiobiotin (DTB) to biotin by the insertion of a sulfur atom into dethiobiotin via a radical-based mechanism.</text>
</comment>
<comment type="catalytic activity">
    <reaction evidence="1">
        <text>(4R,5S)-dethiobiotin + (sulfur carrier)-SH + 2 reduced [2Fe-2S]-[ferredoxin] + 2 S-adenosyl-L-methionine = (sulfur carrier)-H + biotin + 2 5'-deoxyadenosine + 2 L-methionine + 2 oxidized [2Fe-2S]-[ferredoxin]</text>
        <dbReference type="Rhea" id="RHEA:22060"/>
        <dbReference type="Rhea" id="RHEA-COMP:10000"/>
        <dbReference type="Rhea" id="RHEA-COMP:10001"/>
        <dbReference type="Rhea" id="RHEA-COMP:14737"/>
        <dbReference type="Rhea" id="RHEA-COMP:14739"/>
        <dbReference type="ChEBI" id="CHEBI:17319"/>
        <dbReference type="ChEBI" id="CHEBI:29917"/>
        <dbReference type="ChEBI" id="CHEBI:33737"/>
        <dbReference type="ChEBI" id="CHEBI:33738"/>
        <dbReference type="ChEBI" id="CHEBI:57586"/>
        <dbReference type="ChEBI" id="CHEBI:57844"/>
        <dbReference type="ChEBI" id="CHEBI:59789"/>
        <dbReference type="ChEBI" id="CHEBI:64428"/>
        <dbReference type="ChEBI" id="CHEBI:149473"/>
        <dbReference type="EC" id="2.8.1.6"/>
    </reaction>
</comment>
<comment type="cofactor">
    <cofactor evidence="1">
        <name>[4Fe-4S] cluster</name>
        <dbReference type="ChEBI" id="CHEBI:49883"/>
    </cofactor>
    <text evidence="1">Binds 1 [4Fe-4S] cluster. The cluster is coordinated with 3 cysteines and an exchangeable S-adenosyl-L-methionine.</text>
</comment>
<comment type="cofactor">
    <cofactor evidence="1">
        <name>[2Fe-2S] cluster</name>
        <dbReference type="ChEBI" id="CHEBI:190135"/>
    </cofactor>
    <text evidence="1">Binds 1 [2Fe-2S] cluster. The cluster is coordinated with 3 cysteines and 1 arginine.</text>
</comment>
<comment type="pathway">
    <text evidence="1">Cofactor biosynthesis; biotin biosynthesis; biotin from 7,8-diaminononanoate: step 2/2.</text>
</comment>
<comment type="subunit">
    <text evidence="1">Homodimer.</text>
</comment>
<comment type="similarity">
    <text evidence="1">Belongs to the radical SAM superfamily. Biotin synthase family.</text>
</comment>
<sequence>MEVRHNWTVAEVQTLMDKPFMDLIFEAQLVHRKYQQANHVQVSTLLSIKTGACPEDCKYCPQSAHYRTDVDRERLMEVESVLDAAKKAKNSGSTRFCMGAAWKNPKERDMPYLLDMIKGVKEMGLETCMTLGMITAEQAGELSEAGLDYYNHNLDTSPEFYGNIITTRTYQDRLDTLSHVRDAGMKICSGGIIGMGESASDRAGLFVELANLPQHPESVPVNMLVKVKGTPLEDAEDVDPFDFIRLIAVARIMMPESAVRLSAGRESMNEQMQALCFMAGANSVFYGCKLLTTPNPDEDTDMQLFKKLGVNSEQVAQKPDQIQEHELLDRVAERVAARPNKDDLFYEASV</sequence>
<keyword id="KW-0001">2Fe-2S</keyword>
<keyword id="KW-0004">4Fe-4S</keyword>
<keyword id="KW-0093">Biotin biosynthesis</keyword>
<keyword id="KW-0408">Iron</keyword>
<keyword id="KW-0411">Iron-sulfur</keyword>
<keyword id="KW-0479">Metal-binding</keyword>
<keyword id="KW-0949">S-adenosyl-L-methionine</keyword>
<keyword id="KW-0808">Transferase</keyword>